<keyword id="KW-0067">ATP-binding</keyword>
<keyword id="KW-0143">Chaperone</keyword>
<keyword id="KW-0963">Cytoplasm</keyword>
<keyword id="KW-0413">Isomerase</keyword>
<keyword id="KW-0547">Nucleotide-binding</keyword>
<gene>
    <name evidence="1" type="primary">groEL</name>
    <name evidence="1" type="synonym">groL</name>
</gene>
<proteinExistence type="inferred from homology"/>
<accession>Q9AME7</accession>
<feature type="chain" id="PRO_0000063543" description="Chaperonin GroEL">
    <location>
        <begin position="1"/>
        <end position="540"/>
    </location>
</feature>
<feature type="binding site" evidence="1">
    <location>
        <begin position="29"/>
        <end position="32"/>
    </location>
    <ligand>
        <name>ATP</name>
        <dbReference type="ChEBI" id="CHEBI:30616"/>
    </ligand>
</feature>
<feature type="binding site" evidence="1">
    <location>
        <begin position="86"/>
        <end position="90"/>
    </location>
    <ligand>
        <name>ATP</name>
        <dbReference type="ChEBI" id="CHEBI:30616"/>
    </ligand>
</feature>
<feature type="binding site" evidence="1">
    <location>
        <position position="413"/>
    </location>
    <ligand>
        <name>ATP</name>
        <dbReference type="ChEBI" id="CHEBI:30616"/>
    </ligand>
</feature>
<feature type="binding site" evidence="1">
    <location>
        <begin position="476"/>
        <end position="478"/>
    </location>
    <ligand>
        <name>ATP</name>
        <dbReference type="ChEBI" id="CHEBI:30616"/>
    </ligand>
</feature>
<feature type="binding site" evidence="1">
    <location>
        <position position="492"/>
    </location>
    <ligand>
        <name>ATP</name>
        <dbReference type="ChEBI" id="CHEBI:30616"/>
    </ligand>
</feature>
<reference key="1">
    <citation type="submission" date="2000-11" db="EMBL/GenBank/DDBJ databases">
        <title>Cloning, sequencing, and characterization of 60 kDa chaperonin gene from Streptococcus agalactiae.</title>
        <authorList>
            <person name="Jwo-Farn C."/>
        </authorList>
    </citation>
    <scope>NUCLEOTIDE SEQUENCE [GENOMIC DNA]</scope>
</reference>
<evidence type="ECO:0000255" key="1">
    <source>
        <dbReference type="HAMAP-Rule" id="MF_00600"/>
    </source>
</evidence>
<comment type="function">
    <text evidence="1">Together with its co-chaperonin GroES, plays an essential role in assisting protein folding. The GroEL-GroES system forms a nano-cage that allows encapsulation of the non-native substrate proteins and provides a physical environment optimized to promote and accelerate protein folding.</text>
</comment>
<comment type="catalytic activity">
    <reaction evidence="1">
        <text>ATP + H2O + a folded polypeptide = ADP + phosphate + an unfolded polypeptide.</text>
        <dbReference type="EC" id="5.6.1.7"/>
    </reaction>
</comment>
<comment type="subunit">
    <text evidence="1">Forms a cylinder of 14 subunits composed of two heptameric rings stacked back-to-back. Interacts with the co-chaperonin GroES.</text>
</comment>
<comment type="subcellular location">
    <subcellularLocation>
        <location evidence="1">Cytoplasm</location>
    </subcellularLocation>
</comment>
<comment type="similarity">
    <text evidence="1">Belongs to the chaperonin (HSP60) family.</text>
</comment>
<protein>
    <recommendedName>
        <fullName evidence="1">Chaperonin GroEL</fullName>
        <ecNumber evidence="1">5.6.1.7</ecNumber>
    </recommendedName>
    <alternativeName>
        <fullName evidence="1">60 kDa chaperonin</fullName>
    </alternativeName>
    <alternativeName>
        <fullName evidence="1">Chaperonin-60</fullName>
        <shortName evidence="1">Cpn60</shortName>
    </alternativeName>
</protein>
<dbReference type="EC" id="5.6.1.7" evidence="1"/>
<dbReference type="EMBL" id="AF325222">
    <property type="protein sequence ID" value="AAK12938.1"/>
    <property type="molecule type" value="Genomic_DNA"/>
</dbReference>
<dbReference type="SMR" id="Q9AME7"/>
<dbReference type="GO" id="GO:0005737">
    <property type="term" value="C:cytoplasm"/>
    <property type="evidence" value="ECO:0007669"/>
    <property type="project" value="UniProtKB-SubCell"/>
</dbReference>
<dbReference type="GO" id="GO:0005524">
    <property type="term" value="F:ATP binding"/>
    <property type="evidence" value="ECO:0007669"/>
    <property type="project" value="UniProtKB-UniRule"/>
</dbReference>
<dbReference type="GO" id="GO:0140662">
    <property type="term" value="F:ATP-dependent protein folding chaperone"/>
    <property type="evidence" value="ECO:0007669"/>
    <property type="project" value="InterPro"/>
</dbReference>
<dbReference type="GO" id="GO:0016853">
    <property type="term" value="F:isomerase activity"/>
    <property type="evidence" value="ECO:0007669"/>
    <property type="project" value="UniProtKB-KW"/>
</dbReference>
<dbReference type="GO" id="GO:0051082">
    <property type="term" value="F:unfolded protein binding"/>
    <property type="evidence" value="ECO:0007669"/>
    <property type="project" value="UniProtKB-UniRule"/>
</dbReference>
<dbReference type="GO" id="GO:0042026">
    <property type="term" value="P:protein refolding"/>
    <property type="evidence" value="ECO:0007669"/>
    <property type="project" value="UniProtKB-UniRule"/>
</dbReference>
<dbReference type="CDD" id="cd03344">
    <property type="entry name" value="GroEL"/>
    <property type="match status" value="1"/>
</dbReference>
<dbReference type="FunFam" id="1.10.560.10:FF:000001">
    <property type="entry name" value="60 kDa chaperonin"/>
    <property type="match status" value="1"/>
</dbReference>
<dbReference type="FunFam" id="3.50.7.10:FF:000001">
    <property type="entry name" value="60 kDa chaperonin"/>
    <property type="match status" value="1"/>
</dbReference>
<dbReference type="Gene3D" id="3.50.7.10">
    <property type="entry name" value="GroEL"/>
    <property type="match status" value="1"/>
</dbReference>
<dbReference type="Gene3D" id="1.10.560.10">
    <property type="entry name" value="GroEL-like equatorial domain"/>
    <property type="match status" value="1"/>
</dbReference>
<dbReference type="Gene3D" id="3.30.260.10">
    <property type="entry name" value="TCP-1-like chaperonin intermediate domain"/>
    <property type="match status" value="1"/>
</dbReference>
<dbReference type="HAMAP" id="MF_00600">
    <property type="entry name" value="CH60"/>
    <property type="match status" value="1"/>
</dbReference>
<dbReference type="InterPro" id="IPR018370">
    <property type="entry name" value="Chaperonin_Cpn60_CS"/>
</dbReference>
<dbReference type="InterPro" id="IPR001844">
    <property type="entry name" value="Cpn60/GroEL"/>
</dbReference>
<dbReference type="InterPro" id="IPR002423">
    <property type="entry name" value="Cpn60/GroEL/TCP-1"/>
</dbReference>
<dbReference type="InterPro" id="IPR027409">
    <property type="entry name" value="GroEL-like_apical_dom_sf"/>
</dbReference>
<dbReference type="InterPro" id="IPR027413">
    <property type="entry name" value="GROEL-like_equatorial_sf"/>
</dbReference>
<dbReference type="InterPro" id="IPR027410">
    <property type="entry name" value="TCP-1-like_intermed_sf"/>
</dbReference>
<dbReference type="NCBIfam" id="TIGR02348">
    <property type="entry name" value="GroEL"/>
    <property type="match status" value="1"/>
</dbReference>
<dbReference type="NCBIfam" id="NF000592">
    <property type="entry name" value="PRK00013.1"/>
    <property type="match status" value="1"/>
</dbReference>
<dbReference type="NCBIfam" id="NF009487">
    <property type="entry name" value="PRK12849.1"/>
    <property type="match status" value="1"/>
</dbReference>
<dbReference type="NCBIfam" id="NF009488">
    <property type="entry name" value="PRK12850.1"/>
    <property type="match status" value="1"/>
</dbReference>
<dbReference type="NCBIfam" id="NF009489">
    <property type="entry name" value="PRK12851.1"/>
    <property type="match status" value="1"/>
</dbReference>
<dbReference type="PANTHER" id="PTHR45633">
    <property type="entry name" value="60 KDA HEAT SHOCK PROTEIN, MITOCHONDRIAL"/>
    <property type="match status" value="1"/>
</dbReference>
<dbReference type="Pfam" id="PF00118">
    <property type="entry name" value="Cpn60_TCP1"/>
    <property type="match status" value="1"/>
</dbReference>
<dbReference type="PRINTS" id="PR00298">
    <property type="entry name" value="CHAPERONIN60"/>
</dbReference>
<dbReference type="SUPFAM" id="SSF52029">
    <property type="entry name" value="GroEL apical domain-like"/>
    <property type="match status" value="1"/>
</dbReference>
<dbReference type="SUPFAM" id="SSF48592">
    <property type="entry name" value="GroEL equatorial domain-like"/>
    <property type="match status" value="1"/>
</dbReference>
<dbReference type="SUPFAM" id="SSF54849">
    <property type="entry name" value="GroEL-intermediate domain like"/>
    <property type="match status" value="1"/>
</dbReference>
<dbReference type="PROSITE" id="PS00296">
    <property type="entry name" value="CHAPERONINS_CPN60"/>
    <property type="match status" value="1"/>
</dbReference>
<sequence length="540" mass="57287">MAKDIKFSADARSAMVRGVDILADTVFVTLGPKGRNVVLEKAFGSPLITNDGVTIAKEIELEDHFENMGAKLVSEVASKTNDIAGDGTTTATVLPQAIVREGLKNVTAGANPIGIRRGIETAVSAAVEELKEIAQPVSGKEAIAQVAAVSSRSEKVGEYISEAMERVGNDGVITIEESRGMETELEVVEGMQFDRGYLSQYMVTDNEKMVSELENPYILITDKKISNIQEILPLLEEVLKTNRPLLIIADDVDGEALPTLVLNKIRGTFNVVAVKAPGFGDRRKAMLEDIAILTGGTVVTEDLGLDLKDATMQVLGQSAKVTVDKDSTVIVEGAGDSSAIANRVAIIKSQMEATTSDFDREKLQERLAKLAGGVAVIKVGAATETELKEMKLRIEDALNATRAAVEEGIVSGGGTALVNVIEKVAALKLNGDEETGRNIVLRALEEPVRQIAYNAGYKGSVIIARLKQSEIGTGFNAANGEWVDMVTTGIIDPVKVTRSALQNAASVASLILTTEAVVANKPEPEAPTAPAMDPSMMGGF</sequence>
<organism>
    <name type="scientific">Streptococcus agalactiae</name>
    <dbReference type="NCBI Taxonomy" id="1311"/>
    <lineage>
        <taxon>Bacteria</taxon>
        <taxon>Bacillati</taxon>
        <taxon>Bacillota</taxon>
        <taxon>Bacilli</taxon>
        <taxon>Lactobacillales</taxon>
        <taxon>Streptococcaceae</taxon>
        <taxon>Streptococcus</taxon>
    </lineage>
</organism>
<name>CH60_STRAG</name>